<comment type="function">
    <text evidence="2">Accessory subunit of the mitochondrial membrane respiratory chain NADH dehydrogenase (Complex I), that is believed not to be involved in catalysis. Complex I functions in the transfer of electrons from NADH to the respiratory chain. The immediate electron acceptor for the enzyme is believed to be ubiquinone.</text>
</comment>
<comment type="subunit">
    <text evidence="2">Complex I is composed of 45 different subunits.</text>
</comment>
<comment type="subcellular location">
    <subcellularLocation>
        <location evidence="2">Mitochondrion inner membrane</location>
        <topology evidence="3">Peripheral membrane protein</topology>
        <orientation evidence="2">Matrix side</orientation>
    </subcellularLocation>
</comment>
<comment type="similarity">
    <text evidence="4">Belongs to the complex I NDUFA12 subunit family.</text>
</comment>
<sequence>MELVQVLKRGLQQITGHGGLRGYLRVFFRTNDAKVGTLVGEDKYGNKYYEDNKQFFGRHRWVVYTTEMNGKNTFWDVDGSMVPPEWHRWLHSMTDDPPTTKPLTARKFIWTNHKFNVTGTPEQYVPYSTTRKKIQEWIPPSTPYK</sequence>
<name>NDUAC_PANTR</name>
<keyword id="KW-0007">Acetylation</keyword>
<keyword id="KW-0249">Electron transport</keyword>
<keyword id="KW-0472">Membrane</keyword>
<keyword id="KW-0496">Mitochondrion</keyword>
<keyword id="KW-0999">Mitochondrion inner membrane</keyword>
<keyword id="KW-1185">Reference proteome</keyword>
<keyword id="KW-0679">Respiratory chain</keyword>
<keyword id="KW-0813">Transport</keyword>
<feature type="chain" id="PRO_0000251818" description="NADH dehydrogenase [ubiquinone] 1 alpha subcomplex subunit 12">
    <location>
        <begin position="1"/>
        <end position="145"/>
    </location>
</feature>
<feature type="modified residue" description="N-acetylmethionine" evidence="1">
    <location>
        <position position="1"/>
    </location>
</feature>
<dbReference type="EMBL" id="DQ885747">
    <property type="protein sequence ID" value="ABH12256.1"/>
    <property type="molecule type" value="mRNA"/>
</dbReference>
<dbReference type="RefSeq" id="NP_001065252.1">
    <property type="nucleotide sequence ID" value="NM_001071784.1"/>
</dbReference>
<dbReference type="RefSeq" id="XP_063640860.1">
    <property type="nucleotide sequence ID" value="XM_063784790.1"/>
</dbReference>
<dbReference type="SMR" id="Q0MQ87"/>
<dbReference type="FunCoup" id="Q0MQ87">
    <property type="interactions" value="2202"/>
</dbReference>
<dbReference type="STRING" id="9598.ENSPTRP00000067592"/>
<dbReference type="PaxDb" id="9598-ENSPTRP00000009015"/>
<dbReference type="Ensembl" id="ENSPTRT00000104477.1">
    <property type="protein sequence ID" value="ENSPTRP00000067592.1"/>
    <property type="gene ID" value="ENSPTRG00000005306.5"/>
</dbReference>
<dbReference type="GeneID" id="452134"/>
<dbReference type="KEGG" id="ptr:452134"/>
<dbReference type="CTD" id="55967"/>
<dbReference type="VGNC" id="VGNC:5498">
    <property type="gene designation" value="NDUFA12"/>
</dbReference>
<dbReference type="eggNOG" id="KOG3382">
    <property type="taxonomic scope" value="Eukaryota"/>
</dbReference>
<dbReference type="GeneTree" id="ENSGT00390000005848"/>
<dbReference type="HOGENOM" id="CLU_110455_1_0_1"/>
<dbReference type="InParanoid" id="Q0MQ87"/>
<dbReference type="OMA" id="VIYTAEM"/>
<dbReference type="OrthoDB" id="16560at9604"/>
<dbReference type="TreeFam" id="TF106106"/>
<dbReference type="Proteomes" id="UP000002277">
    <property type="component" value="Chromosome 12"/>
</dbReference>
<dbReference type="Bgee" id="ENSPTRG00000005306">
    <property type="expression patterns" value="Expressed in heart and 21 other cell types or tissues"/>
</dbReference>
<dbReference type="GO" id="GO:0005743">
    <property type="term" value="C:mitochondrial inner membrane"/>
    <property type="evidence" value="ECO:0007669"/>
    <property type="project" value="UniProtKB-SubCell"/>
</dbReference>
<dbReference type="GO" id="GO:0045271">
    <property type="term" value="C:respiratory chain complex I"/>
    <property type="evidence" value="ECO:0000250"/>
    <property type="project" value="UniProtKB"/>
</dbReference>
<dbReference type="GO" id="GO:0042775">
    <property type="term" value="P:mitochondrial ATP synthesis coupled electron transport"/>
    <property type="evidence" value="ECO:0007669"/>
    <property type="project" value="Ensembl"/>
</dbReference>
<dbReference type="InterPro" id="IPR007763">
    <property type="entry name" value="NDUFA12"/>
</dbReference>
<dbReference type="PANTHER" id="PTHR12910:SF2">
    <property type="entry name" value="NADH DEHYDROGENASE [UBIQUINONE] 1 ALPHA SUBCOMPLEX SUBUNIT 12"/>
    <property type="match status" value="1"/>
</dbReference>
<dbReference type="PANTHER" id="PTHR12910">
    <property type="entry name" value="NADH-UBIQUINONE OXIDOREDUCTASE SUBUNIT B17.2"/>
    <property type="match status" value="1"/>
</dbReference>
<dbReference type="Pfam" id="PF05071">
    <property type="entry name" value="NDUFA12"/>
    <property type="match status" value="1"/>
</dbReference>
<gene>
    <name type="primary">NDUFA12</name>
</gene>
<evidence type="ECO:0000250" key="1">
    <source>
        <dbReference type="UniProtKB" id="O97725"/>
    </source>
</evidence>
<evidence type="ECO:0000250" key="2">
    <source>
        <dbReference type="UniProtKB" id="Q9UI09"/>
    </source>
</evidence>
<evidence type="ECO:0000255" key="3"/>
<evidence type="ECO:0000305" key="4"/>
<organism>
    <name type="scientific">Pan troglodytes</name>
    <name type="common">Chimpanzee</name>
    <dbReference type="NCBI Taxonomy" id="9598"/>
    <lineage>
        <taxon>Eukaryota</taxon>
        <taxon>Metazoa</taxon>
        <taxon>Chordata</taxon>
        <taxon>Craniata</taxon>
        <taxon>Vertebrata</taxon>
        <taxon>Euteleostomi</taxon>
        <taxon>Mammalia</taxon>
        <taxon>Eutheria</taxon>
        <taxon>Euarchontoglires</taxon>
        <taxon>Primates</taxon>
        <taxon>Haplorrhini</taxon>
        <taxon>Catarrhini</taxon>
        <taxon>Hominidae</taxon>
        <taxon>Pan</taxon>
    </lineage>
</organism>
<accession>Q0MQ87</accession>
<protein>
    <recommendedName>
        <fullName>NADH dehydrogenase [ubiquinone] 1 alpha subcomplex subunit 12</fullName>
    </recommendedName>
    <alternativeName>
        <fullName>Complex I-B17.2</fullName>
        <shortName>CI-B17.2</shortName>
        <shortName>CIB17.2</shortName>
    </alternativeName>
    <alternativeName>
        <fullName>NADH-ubiquinone oxidoreductase subunit B17.2</fullName>
    </alternativeName>
</protein>
<proteinExistence type="evidence at transcript level"/>
<reference key="1">
    <citation type="journal article" date="2006" name="Gene">
        <title>Adaptive selection of mitochondrial complex I subunits during primate radiation.</title>
        <authorList>
            <person name="Mishmar D."/>
            <person name="Ruiz-Pesini E."/>
            <person name="Mondragon-Palomino M."/>
            <person name="Procaccio V."/>
            <person name="Gaut B."/>
            <person name="Wallace D.C."/>
        </authorList>
    </citation>
    <scope>NUCLEOTIDE SEQUENCE [MRNA]</scope>
</reference>